<proteinExistence type="inferred from homology"/>
<name>HISZ_BURTA</name>
<feature type="chain" id="PRO_0000242830" description="ATP phosphoribosyltransferase regulatory subunit">
    <location>
        <begin position="1"/>
        <end position="382"/>
    </location>
</feature>
<dbReference type="EMBL" id="CP000086">
    <property type="protein sequence ID" value="ABC37640.1"/>
    <property type="molecule type" value="Genomic_DNA"/>
</dbReference>
<dbReference type="RefSeq" id="WP_009890843.1">
    <property type="nucleotide sequence ID" value="NZ_CP008785.1"/>
</dbReference>
<dbReference type="SMR" id="Q2SWD4"/>
<dbReference type="GeneID" id="45121962"/>
<dbReference type="KEGG" id="bte:BTH_I2244"/>
<dbReference type="HOGENOM" id="CLU_025113_0_1_4"/>
<dbReference type="UniPathway" id="UPA00031">
    <property type="reaction ID" value="UER00006"/>
</dbReference>
<dbReference type="Proteomes" id="UP000001930">
    <property type="component" value="Chromosome I"/>
</dbReference>
<dbReference type="GO" id="GO:0005737">
    <property type="term" value="C:cytoplasm"/>
    <property type="evidence" value="ECO:0007669"/>
    <property type="project" value="UniProtKB-SubCell"/>
</dbReference>
<dbReference type="GO" id="GO:0004821">
    <property type="term" value="F:histidine-tRNA ligase activity"/>
    <property type="evidence" value="ECO:0007669"/>
    <property type="project" value="TreeGrafter"/>
</dbReference>
<dbReference type="GO" id="GO:0006427">
    <property type="term" value="P:histidyl-tRNA aminoacylation"/>
    <property type="evidence" value="ECO:0007669"/>
    <property type="project" value="TreeGrafter"/>
</dbReference>
<dbReference type="GO" id="GO:0000105">
    <property type="term" value="P:L-histidine biosynthetic process"/>
    <property type="evidence" value="ECO:0007669"/>
    <property type="project" value="UniProtKB-UniRule"/>
</dbReference>
<dbReference type="CDD" id="cd00773">
    <property type="entry name" value="HisRS-like_core"/>
    <property type="match status" value="1"/>
</dbReference>
<dbReference type="Gene3D" id="3.30.930.10">
    <property type="entry name" value="Bira Bifunctional Protein, Domain 2"/>
    <property type="match status" value="1"/>
</dbReference>
<dbReference type="HAMAP" id="MF_00125">
    <property type="entry name" value="HisZ"/>
    <property type="match status" value="1"/>
</dbReference>
<dbReference type="InterPro" id="IPR045864">
    <property type="entry name" value="aa-tRNA-synth_II/BPL/LPL"/>
</dbReference>
<dbReference type="InterPro" id="IPR041715">
    <property type="entry name" value="HisRS-like_core"/>
</dbReference>
<dbReference type="InterPro" id="IPR004516">
    <property type="entry name" value="HisRS/HisZ"/>
</dbReference>
<dbReference type="InterPro" id="IPR004517">
    <property type="entry name" value="HisZ"/>
</dbReference>
<dbReference type="NCBIfam" id="TIGR00443">
    <property type="entry name" value="hisZ_biosyn_reg"/>
    <property type="match status" value="1"/>
</dbReference>
<dbReference type="NCBIfam" id="NF008935">
    <property type="entry name" value="PRK12292.1-1"/>
    <property type="match status" value="1"/>
</dbReference>
<dbReference type="NCBIfam" id="NF009086">
    <property type="entry name" value="PRK12421.1"/>
    <property type="match status" value="1"/>
</dbReference>
<dbReference type="PANTHER" id="PTHR43707:SF1">
    <property type="entry name" value="HISTIDINE--TRNA LIGASE, MITOCHONDRIAL-RELATED"/>
    <property type="match status" value="1"/>
</dbReference>
<dbReference type="PANTHER" id="PTHR43707">
    <property type="entry name" value="HISTIDYL-TRNA SYNTHETASE"/>
    <property type="match status" value="1"/>
</dbReference>
<dbReference type="Pfam" id="PF13393">
    <property type="entry name" value="tRNA-synt_His"/>
    <property type="match status" value="1"/>
</dbReference>
<dbReference type="PIRSF" id="PIRSF001549">
    <property type="entry name" value="His-tRNA_synth"/>
    <property type="match status" value="1"/>
</dbReference>
<dbReference type="SUPFAM" id="SSF55681">
    <property type="entry name" value="Class II aaRS and biotin synthetases"/>
    <property type="match status" value="1"/>
</dbReference>
<accession>Q2SWD4</accession>
<keyword id="KW-0028">Amino-acid biosynthesis</keyword>
<keyword id="KW-0963">Cytoplasm</keyword>
<keyword id="KW-0368">Histidine biosynthesis</keyword>
<comment type="function">
    <text evidence="1">Required for the first step of histidine biosynthesis. May allow the feedback regulation of ATP phosphoribosyltransferase activity by histidine.</text>
</comment>
<comment type="pathway">
    <text evidence="1">Amino-acid biosynthesis; L-histidine biosynthesis; L-histidine from 5-phospho-alpha-D-ribose 1-diphosphate: step 1/9.</text>
</comment>
<comment type="subunit">
    <text evidence="1">Heteromultimer composed of HisG and HisZ subunits.</text>
</comment>
<comment type="subcellular location">
    <subcellularLocation>
        <location evidence="1">Cytoplasm</location>
    </subcellularLocation>
</comment>
<comment type="miscellaneous">
    <text>This function is generally fulfilled by the C-terminal part of HisG, which is missing in some bacteria such as this one.</text>
</comment>
<comment type="similarity">
    <text evidence="1">Belongs to the class-II aminoacyl-tRNA synthetase family. HisZ subfamily.</text>
</comment>
<reference key="1">
    <citation type="journal article" date="2005" name="BMC Genomics">
        <title>Bacterial genome adaptation to niches: divergence of the potential virulence genes in three Burkholderia species of different survival strategies.</title>
        <authorList>
            <person name="Kim H.S."/>
            <person name="Schell M.A."/>
            <person name="Yu Y."/>
            <person name="Ulrich R.L."/>
            <person name="Sarria S.H."/>
            <person name="Nierman W.C."/>
            <person name="DeShazer D."/>
        </authorList>
    </citation>
    <scope>NUCLEOTIDE SEQUENCE [LARGE SCALE GENOMIC DNA]</scope>
    <source>
        <strain>ATCC 700388 / DSM 13276 / CCUG 48851 / CIP 106301 / E264</strain>
    </source>
</reference>
<evidence type="ECO:0000255" key="1">
    <source>
        <dbReference type="HAMAP-Rule" id="MF_00125"/>
    </source>
</evidence>
<protein>
    <recommendedName>
        <fullName evidence="1">ATP phosphoribosyltransferase regulatory subunit</fullName>
    </recommendedName>
</protein>
<sequence>MSTWLLPENIADVLPSEARKIEELRRRLLDRFRSYGYEMVMPPLLEYLESLLTSGGNELRLRTFKLVDQVSGRTLGLRADMTPQVARIDAHLLNRQGVTRLCYAGPVLHTRPRGLHASREQLQIGAEIYGHAGLEADQEIQQLMLDALHLAGLKKIRLDLCHAGVLAALFARDAAAAGRGEALYEALAGKDVPRLNELTDDLGADTRAALRALPRLYGDASVLDEARRQLPALPEIARALDDLAHLASQVKDAEVAIDLADLRGYAYHSGAMFAAYVDGVPNAVAHGGRYDHVGQAYGRARPATGFSLDLREIARISPVEARGAAILAPWKQDDALRAAVGALRDAGEVVIQALPGHDHVLDEFACDRALVERDGAWVVEPR</sequence>
<gene>
    <name evidence="1" type="primary">hisZ</name>
    <name type="ordered locus">BTH_I2244</name>
</gene>
<organism>
    <name type="scientific">Burkholderia thailandensis (strain ATCC 700388 / DSM 13276 / CCUG 48851 / CIP 106301 / E264)</name>
    <dbReference type="NCBI Taxonomy" id="271848"/>
    <lineage>
        <taxon>Bacteria</taxon>
        <taxon>Pseudomonadati</taxon>
        <taxon>Pseudomonadota</taxon>
        <taxon>Betaproteobacteria</taxon>
        <taxon>Burkholderiales</taxon>
        <taxon>Burkholderiaceae</taxon>
        <taxon>Burkholderia</taxon>
        <taxon>pseudomallei group</taxon>
    </lineage>
</organism>